<organism>
    <name type="scientific">Shewanella sp. (strain ANA-3)</name>
    <dbReference type="NCBI Taxonomy" id="94122"/>
    <lineage>
        <taxon>Bacteria</taxon>
        <taxon>Pseudomonadati</taxon>
        <taxon>Pseudomonadota</taxon>
        <taxon>Gammaproteobacteria</taxon>
        <taxon>Alteromonadales</taxon>
        <taxon>Shewanellaceae</taxon>
        <taxon>Shewanella</taxon>
    </lineage>
</organism>
<name>MDH_SHESA</name>
<dbReference type="EC" id="1.1.1.37" evidence="1"/>
<dbReference type="EMBL" id="CP000469">
    <property type="protein sequence ID" value="ABK49732.1"/>
    <property type="molecule type" value="Genomic_DNA"/>
</dbReference>
<dbReference type="RefSeq" id="WP_011718296.1">
    <property type="nucleotide sequence ID" value="NC_008577.1"/>
</dbReference>
<dbReference type="SMR" id="A0L113"/>
<dbReference type="STRING" id="94122.Shewana3_3509"/>
<dbReference type="GeneID" id="94729434"/>
<dbReference type="KEGG" id="shn:Shewana3_3509"/>
<dbReference type="eggNOG" id="COG0039">
    <property type="taxonomic scope" value="Bacteria"/>
</dbReference>
<dbReference type="HOGENOM" id="CLU_047181_0_1_6"/>
<dbReference type="OrthoDB" id="9802969at2"/>
<dbReference type="Proteomes" id="UP000002589">
    <property type="component" value="Chromosome"/>
</dbReference>
<dbReference type="GO" id="GO:0005737">
    <property type="term" value="C:cytoplasm"/>
    <property type="evidence" value="ECO:0007669"/>
    <property type="project" value="TreeGrafter"/>
</dbReference>
<dbReference type="GO" id="GO:0030060">
    <property type="term" value="F:L-malate dehydrogenase (NAD+) activity"/>
    <property type="evidence" value="ECO:0007669"/>
    <property type="project" value="UniProtKB-UniRule"/>
</dbReference>
<dbReference type="GO" id="GO:0006108">
    <property type="term" value="P:malate metabolic process"/>
    <property type="evidence" value="ECO:0007669"/>
    <property type="project" value="InterPro"/>
</dbReference>
<dbReference type="GO" id="GO:0006099">
    <property type="term" value="P:tricarboxylic acid cycle"/>
    <property type="evidence" value="ECO:0007669"/>
    <property type="project" value="UniProtKB-UniRule"/>
</dbReference>
<dbReference type="CDD" id="cd01337">
    <property type="entry name" value="MDH_glyoxysomal_mitochondrial"/>
    <property type="match status" value="1"/>
</dbReference>
<dbReference type="FunFam" id="3.40.50.720:FF:000017">
    <property type="entry name" value="Malate dehydrogenase"/>
    <property type="match status" value="1"/>
</dbReference>
<dbReference type="FunFam" id="3.90.110.10:FF:000001">
    <property type="entry name" value="Malate dehydrogenase"/>
    <property type="match status" value="1"/>
</dbReference>
<dbReference type="Gene3D" id="3.90.110.10">
    <property type="entry name" value="Lactate dehydrogenase/glycoside hydrolase, family 4, C-terminal"/>
    <property type="match status" value="1"/>
</dbReference>
<dbReference type="Gene3D" id="3.40.50.720">
    <property type="entry name" value="NAD(P)-binding Rossmann-like Domain"/>
    <property type="match status" value="1"/>
</dbReference>
<dbReference type="HAMAP" id="MF_01516">
    <property type="entry name" value="Malate_dehydrog_1"/>
    <property type="match status" value="1"/>
</dbReference>
<dbReference type="InterPro" id="IPR001557">
    <property type="entry name" value="L-lactate/malate_DH"/>
</dbReference>
<dbReference type="InterPro" id="IPR022383">
    <property type="entry name" value="Lactate/malate_DH_C"/>
</dbReference>
<dbReference type="InterPro" id="IPR001236">
    <property type="entry name" value="Lactate/malate_DH_N"/>
</dbReference>
<dbReference type="InterPro" id="IPR015955">
    <property type="entry name" value="Lactate_DH/Glyco_Ohase_4_C"/>
</dbReference>
<dbReference type="InterPro" id="IPR001252">
    <property type="entry name" value="Malate_DH_AS"/>
</dbReference>
<dbReference type="InterPro" id="IPR010097">
    <property type="entry name" value="Malate_DH_type1"/>
</dbReference>
<dbReference type="InterPro" id="IPR023958">
    <property type="entry name" value="Malate_DH_type1_bac"/>
</dbReference>
<dbReference type="InterPro" id="IPR036291">
    <property type="entry name" value="NAD(P)-bd_dom_sf"/>
</dbReference>
<dbReference type="NCBIfam" id="TIGR01772">
    <property type="entry name" value="MDH_euk_gproteo"/>
    <property type="match status" value="1"/>
</dbReference>
<dbReference type="PANTHER" id="PTHR11540">
    <property type="entry name" value="MALATE AND LACTATE DEHYDROGENASE"/>
    <property type="match status" value="1"/>
</dbReference>
<dbReference type="PANTHER" id="PTHR11540:SF16">
    <property type="entry name" value="MALATE DEHYDROGENASE, MITOCHONDRIAL"/>
    <property type="match status" value="1"/>
</dbReference>
<dbReference type="Pfam" id="PF02866">
    <property type="entry name" value="Ldh_1_C"/>
    <property type="match status" value="1"/>
</dbReference>
<dbReference type="Pfam" id="PF00056">
    <property type="entry name" value="Ldh_1_N"/>
    <property type="match status" value="1"/>
</dbReference>
<dbReference type="PIRSF" id="PIRSF000102">
    <property type="entry name" value="Lac_mal_DH"/>
    <property type="match status" value="1"/>
</dbReference>
<dbReference type="SUPFAM" id="SSF56327">
    <property type="entry name" value="LDH C-terminal domain-like"/>
    <property type="match status" value="1"/>
</dbReference>
<dbReference type="SUPFAM" id="SSF51735">
    <property type="entry name" value="NAD(P)-binding Rossmann-fold domains"/>
    <property type="match status" value="1"/>
</dbReference>
<dbReference type="PROSITE" id="PS00068">
    <property type="entry name" value="MDH"/>
    <property type="match status" value="1"/>
</dbReference>
<evidence type="ECO:0000255" key="1">
    <source>
        <dbReference type="HAMAP-Rule" id="MF_01516"/>
    </source>
</evidence>
<accession>A0L113</accession>
<comment type="function">
    <text evidence="1">Catalyzes the reversible oxidation of malate to oxaloacetate.</text>
</comment>
<comment type="catalytic activity">
    <reaction evidence="1">
        <text>(S)-malate + NAD(+) = oxaloacetate + NADH + H(+)</text>
        <dbReference type="Rhea" id="RHEA:21432"/>
        <dbReference type="ChEBI" id="CHEBI:15378"/>
        <dbReference type="ChEBI" id="CHEBI:15589"/>
        <dbReference type="ChEBI" id="CHEBI:16452"/>
        <dbReference type="ChEBI" id="CHEBI:57540"/>
        <dbReference type="ChEBI" id="CHEBI:57945"/>
        <dbReference type="EC" id="1.1.1.37"/>
    </reaction>
</comment>
<comment type="subunit">
    <text evidence="1">Homodimer.</text>
</comment>
<comment type="similarity">
    <text evidence="1">Belongs to the LDH/MDH superfamily. MDH type 1 family.</text>
</comment>
<sequence length="311" mass="32149">MKVAVLGAAGGIGQALALLLKTQLPAGSKLSLYDIAPVTPGVAVDLSHIPTAVEIKGFAGEDPTPALEGADVVLISAGVARKPGMDRSDLFNINAGIVRNLIEKVAVTCPKALVGIITNPVNTTVAIAAEVLKKAGVYDKNRLFGVTTLDVIRSETFIAELKGLNVADVKVNVIGGHSGVTILPLLSQVEGVTFSDEEVASLTKRIQNAGTEVVEAKAGGGSATLSMGQAACRFGMSLVRGLQGEANIVECAYVDGGSEHAEFFAQPVLLGKNGIEKVLPYGEVSAFEANARDSMLDTLKGDIKLGVDFVK</sequence>
<feature type="chain" id="PRO_0000294304" description="Malate dehydrogenase">
    <location>
        <begin position="1"/>
        <end position="311"/>
    </location>
</feature>
<feature type="active site" description="Proton acceptor" evidence="1">
    <location>
        <position position="177"/>
    </location>
</feature>
<feature type="binding site" evidence="1">
    <location>
        <begin position="7"/>
        <end position="13"/>
    </location>
    <ligand>
        <name>NAD(+)</name>
        <dbReference type="ChEBI" id="CHEBI:57540"/>
    </ligand>
</feature>
<feature type="binding site" evidence="1">
    <location>
        <position position="34"/>
    </location>
    <ligand>
        <name>NAD(+)</name>
        <dbReference type="ChEBI" id="CHEBI:57540"/>
    </ligand>
</feature>
<feature type="binding site" evidence="1">
    <location>
        <position position="81"/>
    </location>
    <ligand>
        <name>substrate</name>
    </ligand>
</feature>
<feature type="binding site" evidence="1">
    <location>
        <position position="87"/>
    </location>
    <ligand>
        <name>substrate</name>
    </ligand>
</feature>
<feature type="binding site" evidence="1">
    <location>
        <position position="94"/>
    </location>
    <ligand>
        <name>NAD(+)</name>
        <dbReference type="ChEBI" id="CHEBI:57540"/>
    </ligand>
</feature>
<feature type="binding site" evidence="1">
    <location>
        <begin position="117"/>
        <end position="119"/>
    </location>
    <ligand>
        <name>NAD(+)</name>
        <dbReference type="ChEBI" id="CHEBI:57540"/>
    </ligand>
</feature>
<feature type="binding site" evidence="1">
    <location>
        <position position="119"/>
    </location>
    <ligand>
        <name>substrate</name>
    </ligand>
</feature>
<feature type="binding site" evidence="1">
    <location>
        <position position="153"/>
    </location>
    <ligand>
        <name>substrate</name>
    </ligand>
</feature>
<feature type="binding site" evidence="1">
    <location>
        <position position="227"/>
    </location>
    <ligand>
        <name>NAD(+)</name>
        <dbReference type="ChEBI" id="CHEBI:57540"/>
    </ligand>
</feature>
<protein>
    <recommendedName>
        <fullName evidence="1">Malate dehydrogenase</fullName>
        <ecNumber evidence="1">1.1.1.37</ecNumber>
    </recommendedName>
</protein>
<proteinExistence type="inferred from homology"/>
<keyword id="KW-0520">NAD</keyword>
<keyword id="KW-0560">Oxidoreductase</keyword>
<keyword id="KW-0816">Tricarboxylic acid cycle</keyword>
<gene>
    <name evidence="1" type="primary">mdh</name>
    <name type="ordered locus">Shewana3_3509</name>
</gene>
<reference key="1">
    <citation type="submission" date="2006-09" db="EMBL/GenBank/DDBJ databases">
        <title>Complete sequence of chromosome 1 of Shewanella sp. ANA-3.</title>
        <authorList>
            <person name="Copeland A."/>
            <person name="Lucas S."/>
            <person name="Lapidus A."/>
            <person name="Barry K."/>
            <person name="Detter J.C."/>
            <person name="Glavina del Rio T."/>
            <person name="Hammon N."/>
            <person name="Israni S."/>
            <person name="Dalin E."/>
            <person name="Tice H."/>
            <person name="Pitluck S."/>
            <person name="Chertkov O."/>
            <person name="Brettin T."/>
            <person name="Bruce D."/>
            <person name="Han C."/>
            <person name="Tapia R."/>
            <person name="Gilna P."/>
            <person name="Schmutz J."/>
            <person name="Larimer F."/>
            <person name="Land M."/>
            <person name="Hauser L."/>
            <person name="Kyrpides N."/>
            <person name="Kim E."/>
            <person name="Newman D."/>
            <person name="Salticov C."/>
            <person name="Konstantinidis K."/>
            <person name="Klappenback J."/>
            <person name="Tiedje J."/>
            <person name="Richardson P."/>
        </authorList>
    </citation>
    <scope>NUCLEOTIDE SEQUENCE [LARGE SCALE GENOMIC DNA]</scope>
    <source>
        <strain>ANA-3</strain>
    </source>
</reference>